<accession>Q06H12</accession>
<feature type="chain" id="PRO_0000275166" description="ATP synthase subunit alpha, chloroplastic">
    <location>
        <begin position="1"/>
        <end position="507"/>
    </location>
</feature>
<feature type="binding site" evidence="1">
    <location>
        <begin position="170"/>
        <end position="177"/>
    </location>
    <ligand>
        <name>ATP</name>
        <dbReference type="ChEBI" id="CHEBI:30616"/>
    </ligand>
</feature>
<feature type="site" description="Required for activity" evidence="1">
    <location>
        <position position="363"/>
    </location>
</feature>
<comment type="function">
    <text evidence="1">Produces ATP from ADP in the presence of a proton gradient across the membrane. The alpha chain is a regulatory subunit.</text>
</comment>
<comment type="catalytic activity">
    <reaction evidence="1">
        <text>ATP + H2O + 4 H(+)(in) = ADP + phosphate + 5 H(+)(out)</text>
        <dbReference type="Rhea" id="RHEA:57720"/>
        <dbReference type="ChEBI" id="CHEBI:15377"/>
        <dbReference type="ChEBI" id="CHEBI:15378"/>
        <dbReference type="ChEBI" id="CHEBI:30616"/>
        <dbReference type="ChEBI" id="CHEBI:43474"/>
        <dbReference type="ChEBI" id="CHEBI:456216"/>
        <dbReference type="EC" id="7.1.2.2"/>
    </reaction>
</comment>
<comment type="subunit">
    <text evidence="1">F-type ATPases have 2 components, CF(1) - the catalytic core - and CF(0) - the membrane proton channel. CF(1) has five subunits: alpha(3), beta(3), gamma(1), delta(1), epsilon(1). CF(0) has four main subunits: a, b, b' and c.</text>
</comment>
<comment type="subcellular location">
    <subcellularLocation>
        <location evidence="1">Plastid</location>
        <location evidence="1">Chloroplast thylakoid membrane</location>
        <topology evidence="1">Peripheral membrane protein</topology>
    </subcellularLocation>
</comment>
<comment type="similarity">
    <text evidence="1">Belongs to the ATPase alpha/beta chains family.</text>
</comment>
<protein>
    <recommendedName>
        <fullName evidence="1">ATP synthase subunit alpha, chloroplastic</fullName>
        <ecNumber evidence="1">7.1.2.2</ecNumber>
    </recommendedName>
    <alternativeName>
        <fullName evidence="1">ATP synthase F1 sector subunit alpha</fullName>
    </alternativeName>
    <alternativeName>
        <fullName evidence="1">F-ATPase subunit alpha</fullName>
    </alternativeName>
</protein>
<dbReference type="EC" id="7.1.2.2" evidence="1"/>
<dbReference type="EMBL" id="DQ887676">
    <property type="protein sequence ID" value="ABH88282.1"/>
    <property type="molecule type" value="Genomic_DNA"/>
</dbReference>
<dbReference type="RefSeq" id="YP_784371.1">
    <property type="nucleotide sequence ID" value="NC_008456.1"/>
</dbReference>
<dbReference type="SMR" id="Q06H12"/>
<dbReference type="GeneID" id="4363633"/>
<dbReference type="GO" id="GO:0009535">
    <property type="term" value="C:chloroplast thylakoid membrane"/>
    <property type="evidence" value="ECO:0007669"/>
    <property type="project" value="UniProtKB-SubCell"/>
</dbReference>
<dbReference type="GO" id="GO:0045259">
    <property type="term" value="C:proton-transporting ATP synthase complex"/>
    <property type="evidence" value="ECO:0007669"/>
    <property type="project" value="UniProtKB-KW"/>
</dbReference>
<dbReference type="GO" id="GO:0043531">
    <property type="term" value="F:ADP binding"/>
    <property type="evidence" value="ECO:0007669"/>
    <property type="project" value="TreeGrafter"/>
</dbReference>
<dbReference type="GO" id="GO:0005524">
    <property type="term" value="F:ATP binding"/>
    <property type="evidence" value="ECO:0007669"/>
    <property type="project" value="UniProtKB-UniRule"/>
</dbReference>
<dbReference type="GO" id="GO:0046933">
    <property type="term" value="F:proton-transporting ATP synthase activity, rotational mechanism"/>
    <property type="evidence" value="ECO:0007669"/>
    <property type="project" value="UniProtKB-UniRule"/>
</dbReference>
<dbReference type="CDD" id="cd18113">
    <property type="entry name" value="ATP-synt_F1_alpha_C"/>
    <property type="match status" value="1"/>
</dbReference>
<dbReference type="CDD" id="cd18116">
    <property type="entry name" value="ATP-synt_F1_alpha_N"/>
    <property type="match status" value="1"/>
</dbReference>
<dbReference type="CDD" id="cd01132">
    <property type="entry name" value="F1-ATPase_alpha_CD"/>
    <property type="match status" value="1"/>
</dbReference>
<dbReference type="FunFam" id="1.20.150.20:FF:000001">
    <property type="entry name" value="ATP synthase subunit alpha"/>
    <property type="match status" value="1"/>
</dbReference>
<dbReference type="FunFam" id="2.40.30.20:FF:000001">
    <property type="entry name" value="ATP synthase subunit alpha"/>
    <property type="match status" value="1"/>
</dbReference>
<dbReference type="FunFam" id="3.40.50.300:FF:000002">
    <property type="entry name" value="ATP synthase subunit alpha"/>
    <property type="match status" value="1"/>
</dbReference>
<dbReference type="Gene3D" id="2.40.30.20">
    <property type="match status" value="1"/>
</dbReference>
<dbReference type="Gene3D" id="1.20.150.20">
    <property type="entry name" value="ATP synthase alpha/beta chain, C-terminal domain"/>
    <property type="match status" value="1"/>
</dbReference>
<dbReference type="Gene3D" id="3.40.50.300">
    <property type="entry name" value="P-loop containing nucleotide triphosphate hydrolases"/>
    <property type="match status" value="1"/>
</dbReference>
<dbReference type="HAMAP" id="MF_01346">
    <property type="entry name" value="ATP_synth_alpha_bact"/>
    <property type="match status" value="1"/>
</dbReference>
<dbReference type="InterPro" id="IPR023366">
    <property type="entry name" value="ATP_synth_asu-like_sf"/>
</dbReference>
<dbReference type="InterPro" id="IPR000793">
    <property type="entry name" value="ATP_synth_asu_C"/>
</dbReference>
<dbReference type="InterPro" id="IPR038376">
    <property type="entry name" value="ATP_synth_asu_C_sf"/>
</dbReference>
<dbReference type="InterPro" id="IPR033732">
    <property type="entry name" value="ATP_synth_F1_a_nt-bd_dom"/>
</dbReference>
<dbReference type="InterPro" id="IPR005294">
    <property type="entry name" value="ATP_synth_F1_asu"/>
</dbReference>
<dbReference type="InterPro" id="IPR020003">
    <property type="entry name" value="ATPase_a/bsu_AS"/>
</dbReference>
<dbReference type="InterPro" id="IPR004100">
    <property type="entry name" value="ATPase_F1/V1/A1_a/bsu_N"/>
</dbReference>
<dbReference type="InterPro" id="IPR036121">
    <property type="entry name" value="ATPase_F1/V1/A1_a/bsu_N_sf"/>
</dbReference>
<dbReference type="InterPro" id="IPR000194">
    <property type="entry name" value="ATPase_F1/V1/A1_a/bsu_nucl-bd"/>
</dbReference>
<dbReference type="InterPro" id="IPR027417">
    <property type="entry name" value="P-loop_NTPase"/>
</dbReference>
<dbReference type="NCBIfam" id="TIGR00962">
    <property type="entry name" value="atpA"/>
    <property type="match status" value="1"/>
</dbReference>
<dbReference type="NCBIfam" id="NF009884">
    <property type="entry name" value="PRK13343.1"/>
    <property type="match status" value="1"/>
</dbReference>
<dbReference type="PANTHER" id="PTHR48082">
    <property type="entry name" value="ATP SYNTHASE SUBUNIT ALPHA, MITOCHONDRIAL"/>
    <property type="match status" value="1"/>
</dbReference>
<dbReference type="PANTHER" id="PTHR48082:SF2">
    <property type="entry name" value="ATP SYNTHASE SUBUNIT ALPHA, MITOCHONDRIAL"/>
    <property type="match status" value="1"/>
</dbReference>
<dbReference type="Pfam" id="PF00006">
    <property type="entry name" value="ATP-synt_ab"/>
    <property type="match status" value="1"/>
</dbReference>
<dbReference type="Pfam" id="PF00306">
    <property type="entry name" value="ATP-synt_ab_C"/>
    <property type="match status" value="1"/>
</dbReference>
<dbReference type="Pfam" id="PF02874">
    <property type="entry name" value="ATP-synt_ab_N"/>
    <property type="match status" value="1"/>
</dbReference>
<dbReference type="PIRSF" id="PIRSF039088">
    <property type="entry name" value="F_ATPase_subunit_alpha"/>
    <property type="match status" value="1"/>
</dbReference>
<dbReference type="SUPFAM" id="SSF47917">
    <property type="entry name" value="C-terminal domain of alpha and beta subunits of F1 ATP synthase"/>
    <property type="match status" value="1"/>
</dbReference>
<dbReference type="SUPFAM" id="SSF50615">
    <property type="entry name" value="N-terminal domain of alpha and beta subunits of F1 ATP synthase"/>
    <property type="match status" value="1"/>
</dbReference>
<dbReference type="SUPFAM" id="SSF52540">
    <property type="entry name" value="P-loop containing nucleoside triphosphate hydrolases"/>
    <property type="match status" value="1"/>
</dbReference>
<dbReference type="PROSITE" id="PS00152">
    <property type="entry name" value="ATPASE_ALPHA_BETA"/>
    <property type="match status" value="1"/>
</dbReference>
<proteinExistence type="inferred from homology"/>
<name>ATPA_DRIGR</name>
<keyword id="KW-0066">ATP synthesis</keyword>
<keyword id="KW-0067">ATP-binding</keyword>
<keyword id="KW-0139">CF(1)</keyword>
<keyword id="KW-0150">Chloroplast</keyword>
<keyword id="KW-0375">Hydrogen ion transport</keyword>
<keyword id="KW-0406">Ion transport</keyword>
<keyword id="KW-0472">Membrane</keyword>
<keyword id="KW-0547">Nucleotide-binding</keyword>
<keyword id="KW-0934">Plastid</keyword>
<keyword id="KW-0793">Thylakoid</keyword>
<keyword id="KW-1278">Translocase</keyword>
<keyword id="KW-0813">Transport</keyword>
<geneLocation type="chloroplast"/>
<reference key="1">
    <citation type="journal article" date="2006" name="BMC Evol. Biol.">
        <title>Complete plastid genome sequences of Drimys, Liriodendron, and Piper: implications for the phylogenetic relationships of magnoliids.</title>
        <authorList>
            <person name="Cai Z."/>
            <person name="Penaflor C."/>
            <person name="Kuehl J.V."/>
            <person name="Leebens-Mack J."/>
            <person name="Carlson J.E."/>
            <person name="dePamphilis C.W."/>
            <person name="Boore J.L."/>
            <person name="Jansen R.K."/>
        </authorList>
    </citation>
    <scope>NUCLEOTIDE SEQUENCE [LARGE SCALE GENOMIC DNA]</scope>
</reference>
<evidence type="ECO:0000255" key="1">
    <source>
        <dbReference type="HAMAP-Rule" id="MF_01346"/>
    </source>
</evidence>
<sequence length="507" mass="55304">MVTLRVDEISNIIRERIEQYNREVTIVNTGTVLQVGDGIARIHGLDQVMAGELVEFEEGTVGIALNLESNNVGVVLMGDGLMIQEGSSVKATGRIAQIPVSEAYLGRVINALAKPIDGRGEISASESRLIESPAPGIISRRSVYEPLQTGLIAIDSMIPIGRGQRELIIGDRQTGKTAVATDTILNQKGQNVICLYVAIGQKASSVAQVVTTFQERGAMEYTIVVAETADSPATLQYLAPYTGAALAEYFMYRERHTSIIYDDLSKQAQAYRQMSLLLRRPPGREAYPGDVFYLHSRLLERAAKSSSHLGEGSMTALPIVETQSGDVSAYIPTNVISITDGQIFLSSDLFNAGIRPAINVGISVSRVGSAAQIKAMKQVAGKSKLELAQFAELEAFAQFASDLDKATQNQLARGQRLRELLKQSQSAPLTVEEQILTIYTGANGYLDPLDIGQVKKFLVQLRTHLKTNKPQFQEIISSTKTFTEQAEALLKEAIPEQMELFILQEQT</sequence>
<gene>
    <name evidence="1" type="primary">atpA</name>
</gene>
<organism>
    <name type="scientific">Drimys granadensis</name>
    <dbReference type="NCBI Taxonomy" id="224735"/>
    <lineage>
        <taxon>Eukaryota</taxon>
        <taxon>Viridiplantae</taxon>
        <taxon>Streptophyta</taxon>
        <taxon>Embryophyta</taxon>
        <taxon>Tracheophyta</taxon>
        <taxon>Spermatophyta</taxon>
        <taxon>Magnoliopsida</taxon>
        <taxon>Magnoliidae</taxon>
        <taxon>Canellales</taxon>
        <taxon>Winteraceae</taxon>
        <taxon>Drimys</taxon>
    </lineage>
</organism>